<name>U95_HHV6U</name>
<organismHost>
    <name type="scientific">Homo sapiens</name>
    <name type="common">Human</name>
    <dbReference type="NCBI Taxonomy" id="9606"/>
</organismHost>
<proteinExistence type="inferred from homology"/>
<protein>
    <recommendedName>
        <fullName>Uncharacterized protein U95</fullName>
    </recommendedName>
</protein>
<dbReference type="EMBL" id="D11134">
    <property type="protein sequence ID" value="BAA01907.1"/>
    <property type="molecule type" value="Genomic_DNA"/>
</dbReference>
<dbReference type="EMBL" id="X83413">
    <property type="protein sequence ID" value="CAA58344.1"/>
    <property type="molecule type" value="Genomic_DNA"/>
</dbReference>
<dbReference type="PIR" id="JQ1631">
    <property type="entry name" value="JQ1631"/>
</dbReference>
<dbReference type="RefSeq" id="NP_042988.1">
    <property type="nucleotide sequence ID" value="NC_001664.2"/>
</dbReference>
<dbReference type="GlyCosmos" id="Q89882">
    <property type="glycosylation" value="10 sites, No reported glycans"/>
</dbReference>
<dbReference type="GeneID" id="1487971"/>
<dbReference type="KEGG" id="vg:1487971"/>
<dbReference type="Proteomes" id="UP000009295">
    <property type="component" value="Segment"/>
</dbReference>
<accession>Q89882</accession>
<accession>Q76WP0</accession>
<feature type="chain" id="PRO_0000342585" description="Uncharacterized protein U95">
    <location>
        <begin position="1"/>
        <end position="1121"/>
    </location>
</feature>
<feature type="region of interest" description="Disordered" evidence="2">
    <location>
        <begin position="179"/>
        <end position="198"/>
    </location>
</feature>
<feature type="region of interest" description="Disordered" evidence="2">
    <location>
        <begin position="649"/>
        <end position="684"/>
    </location>
</feature>
<feature type="region of interest" description="Disordered" evidence="2">
    <location>
        <begin position="701"/>
        <end position="734"/>
    </location>
</feature>
<feature type="compositionally biased region" description="Polar residues" evidence="2">
    <location>
        <begin position="701"/>
        <end position="715"/>
    </location>
</feature>
<feature type="glycosylation site" description="N-linked (GlcNAc...) asparagine; by host" evidence="1">
    <location>
        <position position="188"/>
    </location>
</feature>
<feature type="glycosylation site" description="N-linked (GlcNAc...) asparagine; by host" evidence="1">
    <location>
        <position position="325"/>
    </location>
</feature>
<feature type="glycosylation site" description="N-linked (GlcNAc...) asparagine; by host" evidence="1">
    <location>
        <position position="351"/>
    </location>
</feature>
<feature type="glycosylation site" description="N-linked (GlcNAc...) asparagine; by host" evidence="1">
    <location>
        <position position="449"/>
    </location>
</feature>
<feature type="glycosylation site" description="N-linked (GlcNAc...) asparagine; by host" evidence="1">
    <location>
        <position position="561"/>
    </location>
</feature>
<feature type="glycosylation site" description="N-linked (GlcNAc...) asparagine; by host" evidence="1">
    <location>
        <position position="615"/>
    </location>
</feature>
<feature type="glycosylation site" description="N-linked (GlcNAc...) asparagine; by host" evidence="1">
    <location>
        <position position="838"/>
    </location>
</feature>
<feature type="glycosylation site" description="N-linked (GlcNAc...) asparagine; by host" evidence="1">
    <location>
        <position position="911"/>
    </location>
</feature>
<feature type="glycosylation site" description="N-linked (GlcNAc...) asparagine; by host" evidence="1">
    <location>
        <position position="914"/>
    </location>
</feature>
<feature type="glycosylation site" description="N-linked (GlcNAc...) asparagine; by host" evidence="1">
    <location>
        <position position="980"/>
    </location>
</feature>
<evidence type="ECO:0000255" key="1"/>
<evidence type="ECO:0000256" key="2">
    <source>
        <dbReference type="SAM" id="MobiDB-lite"/>
    </source>
</evidence>
<evidence type="ECO:0000305" key="3"/>
<reference key="1">
    <citation type="journal article" date="1992" name="J. Gen. Virol.">
        <title>The right end of the unique region of the genome of human herpesvirus 6 U1102 contains a candidate immediate early gene enhancer and a homologue of the human cytomegalovirus US22 gene family.</title>
        <authorList>
            <person name="Thomson B.J."/>
            <person name="Honess R.W."/>
        </authorList>
    </citation>
    <scope>NUCLEOTIDE SEQUENCE [GENOMIC DNA]</scope>
</reference>
<reference key="2">
    <citation type="journal article" date="1995" name="Virology">
        <title>The DNA sequence of human herpesvirus-6: structure, coding content, and genome evolution.</title>
        <authorList>
            <person name="Gompels U.A."/>
            <person name="Nicholas J."/>
            <person name="Lawrence G.L."/>
            <person name="Jones M."/>
            <person name="Thomson B.J."/>
            <person name="Martin M.E.D."/>
            <person name="Efstathiou S."/>
            <person name="Craxton M.A."/>
            <person name="Macaulay H.A."/>
        </authorList>
    </citation>
    <scope>NUCLEOTIDE SEQUENCE [LARGE SCALE GENOMIC DNA]</scope>
</reference>
<comment type="similarity">
    <text evidence="3">Belongs to the herpesviridae US22 family.</text>
</comment>
<keyword id="KW-0325">Glycoprotein</keyword>
<keyword id="KW-1185">Reference proteome</keyword>
<organism>
    <name type="scientific">Human herpesvirus 6A (strain Uganda-1102)</name>
    <name type="common">HHV-6 variant A</name>
    <name type="synonym">Human B lymphotropic virus</name>
    <dbReference type="NCBI Taxonomy" id="10370"/>
    <lineage>
        <taxon>Viruses</taxon>
        <taxon>Duplodnaviria</taxon>
        <taxon>Heunggongvirae</taxon>
        <taxon>Peploviricota</taxon>
        <taxon>Herviviricetes</taxon>
        <taxon>Herpesvirales</taxon>
        <taxon>Orthoherpesviridae</taxon>
        <taxon>Betaherpesvirinae</taxon>
        <taxon>Roseolovirus</taxon>
        <taxon>Roseolovirus humanbeta6a</taxon>
        <taxon>Human betaherpesvirus 6A</taxon>
    </lineage>
</organism>
<gene>
    <name type="primary">U95</name>
    <name type="synonym">HCRF2</name>
</gene>
<sequence>MSAHPDDLFWQQILNMDPTELLSDDVISSTCDENTAAGTDIMQPLCVDMSVQPTTSGCHTGAMMSDSYFSNDTPDQNCQSHSTLTDLSPEDMNNQINVQPNQMTFQPISPPIQDQNYGYSNNMINPIKPASIIKLHGHSIGEMTVTDPSSHVNAQHFVQQSNPKFFLNMYPCMTANSQGPGECQSVHNQSSGSGSNSYDINTAPRDEWIFTTSGGESWVLKRNTPNPPNSRTNLIFNNAQPIFHTQPQVSGFSDCSYQGGGLNSREYVNLAGYTPVCNMQNIKNSWATQLGASIDCMTASPTGIDANVNSAFQPVGVVSNNRGANVSMGGMGNYIENNSPWNQYYKSEMANNSINVKESNVYGHVGCVNDAISDKQGGTANVPSSLLNPDHQDWMRMTGTNTHMLNNINTNTEMENYDFPENDGNVHGATGVDLSTLSNGQQHSAFEGNGTFPVVNTGNPRTTLNCAPQLFLLGGNPTIAHPMNGNNETPDKNVCKPTPSTGVIKKLNFDGVDRGGGIGNFPKLASFVAMREKMSNTVNPSCGTFLEQLEGLRQQNSFEKNISFADLHFSEEDDVLSSASSVSCNSNCDMKIEVSQQGITVSNLQQGFRQQMNMNSSVVKMDGSYKTQEMSNGCATDVTDNAGTIQQNKRIHSQNENPEDGQVREGGCSDVRNEPPRKSARIHNMKSEGVTCGMCMTAADSTRQDASGGSSSGTKNEYYDDESELTGLSDTDSDNEVQCCQEVTKVGPKTYSSENFNPEYRQAKRLLADIPYRRWIPDPVNMEDNDGPFIPIVTRPATVCMNGRRRRTFFRQCVTAFGPLSKLTYFKELLQSYVSKNNNSYLSISWPPKHGVYVMSEKKLGYEHIPTLKDKFPLPCGWMMVLGVVGAEPPAALNKNMVILLCENRWVLLHNYSNSTHELFLAASDLKQFMEEGLSRCDPIYEESTVPYGVAMENSLRDFLRNSRTFQDLMDQRDNMHGCNWTFNGMPGRLGDRVIHLCNPESVDSIPGDEAVVCEGRPLYFFAYVTTFKSNPATKATVLIAADKDLRIYGYHKGRPRIRYLCKNVKTFFKAGARKFYLDFQITPKRLLAVNEEEYLNTLQNAPCLLLKPSVFRNIYSQEGK</sequence>